<reference key="1">
    <citation type="submission" date="2007-04" db="EMBL/GenBank/DDBJ databases">
        <title>Complete sequence of Pseudomonas mendocina ymp.</title>
        <authorList>
            <consortium name="US DOE Joint Genome Institute"/>
            <person name="Copeland A."/>
            <person name="Lucas S."/>
            <person name="Lapidus A."/>
            <person name="Barry K."/>
            <person name="Glavina del Rio T."/>
            <person name="Dalin E."/>
            <person name="Tice H."/>
            <person name="Pitluck S."/>
            <person name="Kiss H."/>
            <person name="Brettin T."/>
            <person name="Detter J.C."/>
            <person name="Bruce D."/>
            <person name="Han C."/>
            <person name="Schmutz J."/>
            <person name="Larimer F."/>
            <person name="Land M."/>
            <person name="Hauser L."/>
            <person name="Kyrpides N."/>
            <person name="Mikhailova N."/>
            <person name="Hersman L."/>
            <person name="Dubois J."/>
            <person name="Maurice P."/>
            <person name="Richardson P."/>
        </authorList>
    </citation>
    <scope>NUCLEOTIDE SEQUENCE [LARGE SCALE GENOMIC DNA]</scope>
    <source>
        <strain>ymp</strain>
    </source>
</reference>
<evidence type="ECO:0000255" key="1">
    <source>
        <dbReference type="HAMAP-Rule" id="MF_01694"/>
    </source>
</evidence>
<evidence type="ECO:0000255" key="2">
    <source>
        <dbReference type="PROSITE-ProRule" id="PRU01266"/>
    </source>
</evidence>
<accession>A4XZR9</accession>
<protein>
    <recommendedName>
        <fullName evidence="1">Biotin synthase</fullName>
        <ecNumber evidence="1">2.8.1.6</ecNumber>
    </recommendedName>
</protein>
<gene>
    <name evidence="1" type="primary">bioB</name>
    <name type="ordered locus">Pmen_4088</name>
</gene>
<dbReference type="EC" id="2.8.1.6" evidence="1"/>
<dbReference type="EMBL" id="CP000680">
    <property type="protein sequence ID" value="ABP86835.1"/>
    <property type="molecule type" value="Genomic_DNA"/>
</dbReference>
<dbReference type="SMR" id="A4XZR9"/>
<dbReference type="STRING" id="399739.Pmen_4088"/>
<dbReference type="KEGG" id="pmy:Pmen_4088"/>
<dbReference type="PATRIC" id="fig|399739.8.peg.4140"/>
<dbReference type="eggNOG" id="COG0502">
    <property type="taxonomic scope" value="Bacteria"/>
</dbReference>
<dbReference type="HOGENOM" id="CLU_033172_1_2_6"/>
<dbReference type="OrthoDB" id="9786826at2"/>
<dbReference type="UniPathway" id="UPA00078">
    <property type="reaction ID" value="UER00162"/>
</dbReference>
<dbReference type="GO" id="GO:0051537">
    <property type="term" value="F:2 iron, 2 sulfur cluster binding"/>
    <property type="evidence" value="ECO:0007669"/>
    <property type="project" value="UniProtKB-KW"/>
</dbReference>
<dbReference type="GO" id="GO:0051539">
    <property type="term" value="F:4 iron, 4 sulfur cluster binding"/>
    <property type="evidence" value="ECO:0007669"/>
    <property type="project" value="UniProtKB-KW"/>
</dbReference>
<dbReference type="GO" id="GO:0004076">
    <property type="term" value="F:biotin synthase activity"/>
    <property type="evidence" value="ECO:0007669"/>
    <property type="project" value="UniProtKB-UniRule"/>
</dbReference>
<dbReference type="GO" id="GO:0005506">
    <property type="term" value="F:iron ion binding"/>
    <property type="evidence" value="ECO:0007669"/>
    <property type="project" value="UniProtKB-UniRule"/>
</dbReference>
<dbReference type="GO" id="GO:0009102">
    <property type="term" value="P:biotin biosynthetic process"/>
    <property type="evidence" value="ECO:0007669"/>
    <property type="project" value="UniProtKB-UniRule"/>
</dbReference>
<dbReference type="CDD" id="cd01335">
    <property type="entry name" value="Radical_SAM"/>
    <property type="match status" value="1"/>
</dbReference>
<dbReference type="FunFam" id="3.20.20.70:FF:000011">
    <property type="entry name" value="Biotin synthase"/>
    <property type="match status" value="1"/>
</dbReference>
<dbReference type="Gene3D" id="3.20.20.70">
    <property type="entry name" value="Aldolase class I"/>
    <property type="match status" value="1"/>
</dbReference>
<dbReference type="HAMAP" id="MF_01694">
    <property type="entry name" value="BioB"/>
    <property type="match status" value="1"/>
</dbReference>
<dbReference type="InterPro" id="IPR013785">
    <property type="entry name" value="Aldolase_TIM"/>
</dbReference>
<dbReference type="InterPro" id="IPR010722">
    <property type="entry name" value="BATS_dom"/>
</dbReference>
<dbReference type="InterPro" id="IPR002684">
    <property type="entry name" value="Biotin_synth/BioAB"/>
</dbReference>
<dbReference type="InterPro" id="IPR024177">
    <property type="entry name" value="Biotin_synthase"/>
</dbReference>
<dbReference type="InterPro" id="IPR006638">
    <property type="entry name" value="Elp3/MiaA/NifB-like_rSAM"/>
</dbReference>
<dbReference type="InterPro" id="IPR007197">
    <property type="entry name" value="rSAM"/>
</dbReference>
<dbReference type="NCBIfam" id="TIGR00433">
    <property type="entry name" value="bioB"/>
    <property type="match status" value="1"/>
</dbReference>
<dbReference type="PANTHER" id="PTHR22976">
    <property type="entry name" value="BIOTIN SYNTHASE"/>
    <property type="match status" value="1"/>
</dbReference>
<dbReference type="PANTHER" id="PTHR22976:SF2">
    <property type="entry name" value="BIOTIN SYNTHASE, MITOCHONDRIAL"/>
    <property type="match status" value="1"/>
</dbReference>
<dbReference type="Pfam" id="PF06968">
    <property type="entry name" value="BATS"/>
    <property type="match status" value="1"/>
</dbReference>
<dbReference type="Pfam" id="PF04055">
    <property type="entry name" value="Radical_SAM"/>
    <property type="match status" value="1"/>
</dbReference>
<dbReference type="PIRSF" id="PIRSF001619">
    <property type="entry name" value="Biotin_synth"/>
    <property type="match status" value="1"/>
</dbReference>
<dbReference type="SFLD" id="SFLDF00272">
    <property type="entry name" value="biotin_synthase"/>
    <property type="match status" value="1"/>
</dbReference>
<dbReference type="SFLD" id="SFLDG01278">
    <property type="entry name" value="biotin_synthase_like"/>
    <property type="match status" value="1"/>
</dbReference>
<dbReference type="SMART" id="SM00876">
    <property type="entry name" value="BATS"/>
    <property type="match status" value="1"/>
</dbReference>
<dbReference type="SMART" id="SM00729">
    <property type="entry name" value="Elp3"/>
    <property type="match status" value="1"/>
</dbReference>
<dbReference type="SUPFAM" id="SSF102114">
    <property type="entry name" value="Radical SAM enzymes"/>
    <property type="match status" value="1"/>
</dbReference>
<dbReference type="PROSITE" id="PS51918">
    <property type="entry name" value="RADICAL_SAM"/>
    <property type="match status" value="1"/>
</dbReference>
<proteinExistence type="inferred from homology"/>
<feature type="chain" id="PRO_0000381559" description="Biotin synthase">
    <location>
        <begin position="1"/>
        <end position="352"/>
    </location>
</feature>
<feature type="domain" description="Radical SAM core" evidence="2">
    <location>
        <begin position="44"/>
        <end position="262"/>
    </location>
</feature>
<feature type="binding site" evidence="1">
    <location>
        <position position="59"/>
    </location>
    <ligand>
        <name>[4Fe-4S] cluster</name>
        <dbReference type="ChEBI" id="CHEBI:49883"/>
        <note>4Fe-4S-S-AdoMet</note>
    </ligand>
</feature>
<feature type="binding site" evidence="1">
    <location>
        <position position="63"/>
    </location>
    <ligand>
        <name>[4Fe-4S] cluster</name>
        <dbReference type="ChEBI" id="CHEBI:49883"/>
        <note>4Fe-4S-S-AdoMet</note>
    </ligand>
</feature>
<feature type="binding site" evidence="1">
    <location>
        <position position="66"/>
    </location>
    <ligand>
        <name>[4Fe-4S] cluster</name>
        <dbReference type="ChEBI" id="CHEBI:49883"/>
        <note>4Fe-4S-S-AdoMet</note>
    </ligand>
</feature>
<feature type="binding site" evidence="1">
    <location>
        <position position="103"/>
    </location>
    <ligand>
        <name>[2Fe-2S] cluster</name>
        <dbReference type="ChEBI" id="CHEBI:190135"/>
    </ligand>
</feature>
<feature type="binding site" evidence="1">
    <location>
        <position position="134"/>
    </location>
    <ligand>
        <name>[2Fe-2S] cluster</name>
        <dbReference type="ChEBI" id="CHEBI:190135"/>
    </ligand>
</feature>
<feature type="binding site" evidence="1">
    <location>
        <position position="194"/>
    </location>
    <ligand>
        <name>[2Fe-2S] cluster</name>
        <dbReference type="ChEBI" id="CHEBI:190135"/>
    </ligand>
</feature>
<feature type="binding site" evidence="1">
    <location>
        <position position="266"/>
    </location>
    <ligand>
        <name>[2Fe-2S] cluster</name>
        <dbReference type="ChEBI" id="CHEBI:190135"/>
    </ligand>
</feature>
<comment type="function">
    <text evidence="1">Catalyzes the conversion of dethiobiotin (DTB) to biotin by the insertion of a sulfur atom into dethiobiotin via a radical-based mechanism.</text>
</comment>
<comment type="catalytic activity">
    <reaction evidence="1">
        <text>(4R,5S)-dethiobiotin + (sulfur carrier)-SH + 2 reduced [2Fe-2S]-[ferredoxin] + 2 S-adenosyl-L-methionine = (sulfur carrier)-H + biotin + 2 5'-deoxyadenosine + 2 L-methionine + 2 oxidized [2Fe-2S]-[ferredoxin]</text>
        <dbReference type="Rhea" id="RHEA:22060"/>
        <dbReference type="Rhea" id="RHEA-COMP:10000"/>
        <dbReference type="Rhea" id="RHEA-COMP:10001"/>
        <dbReference type="Rhea" id="RHEA-COMP:14737"/>
        <dbReference type="Rhea" id="RHEA-COMP:14739"/>
        <dbReference type="ChEBI" id="CHEBI:17319"/>
        <dbReference type="ChEBI" id="CHEBI:29917"/>
        <dbReference type="ChEBI" id="CHEBI:33737"/>
        <dbReference type="ChEBI" id="CHEBI:33738"/>
        <dbReference type="ChEBI" id="CHEBI:57586"/>
        <dbReference type="ChEBI" id="CHEBI:57844"/>
        <dbReference type="ChEBI" id="CHEBI:59789"/>
        <dbReference type="ChEBI" id="CHEBI:64428"/>
        <dbReference type="ChEBI" id="CHEBI:149473"/>
        <dbReference type="EC" id="2.8.1.6"/>
    </reaction>
</comment>
<comment type="cofactor">
    <cofactor evidence="1">
        <name>[4Fe-4S] cluster</name>
        <dbReference type="ChEBI" id="CHEBI:49883"/>
    </cofactor>
    <text evidence="1">Binds 1 [4Fe-4S] cluster. The cluster is coordinated with 3 cysteines and an exchangeable S-adenosyl-L-methionine.</text>
</comment>
<comment type="cofactor">
    <cofactor evidence="1">
        <name>[2Fe-2S] cluster</name>
        <dbReference type="ChEBI" id="CHEBI:190135"/>
    </cofactor>
    <text evidence="1">Binds 1 [2Fe-2S] cluster. The cluster is coordinated with 3 cysteines and 1 arginine.</text>
</comment>
<comment type="pathway">
    <text evidence="1">Cofactor biosynthesis; biotin biosynthesis; biotin from 7,8-diaminononanoate: step 2/2.</text>
</comment>
<comment type="subunit">
    <text evidence="1">Homodimer.</text>
</comment>
<comment type="similarity">
    <text evidence="1">Belongs to the radical SAM superfamily. Biotin synthase family.</text>
</comment>
<name>BIOB_ECTM1</name>
<sequence>MSATAAITTRHDWTLAEVRALFEQPFNDLLFQAQSVHRQHFDPNRVQVSTLLSIKTGACPEDCKYCPQSGHYNTGLDKEKLMEVEKVLQAAAEAKAIGSTRFCMGAAWKHPSAKDMPYVLKMVEGVKKLGLETCMTLGKLTQEQTQALAEAGLDYYNHNLDTSPEFYGNIITTRTYSERLQTLAYVREAGMKICSGGILGMGESVDDRAGLLIQLANLPEHPESVPINMLVKVKGTPLAEEKDVDPFDFIRTLAVARIMMPKSHVRLSAGREQMNEQMQALAFMAGANSIFYGEKLLTTANPQADKDMALFKRLGIKPEEREEHADEVHQAAIEQALVEQRDSKLFYNAASA</sequence>
<keyword id="KW-0001">2Fe-2S</keyword>
<keyword id="KW-0004">4Fe-4S</keyword>
<keyword id="KW-0093">Biotin biosynthesis</keyword>
<keyword id="KW-0408">Iron</keyword>
<keyword id="KW-0411">Iron-sulfur</keyword>
<keyword id="KW-0479">Metal-binding</keyword>
<keyword id="KW-0949">S-adenosyl-L-methionine</keyword>
<keyword id="KW-0808">Transferase</keyword>
<organism>
    <name type="scientific">Ectopseudomonas mendocina (strain ymp)</name>
    <name type="common">Pseudomonas mendocina</name>
    <dbReference type="NCBI Taxonomy" id="399739"/>
    <lineage>
        <taxon>Bacteria</taxon>
        <taxon>Pseudomonadati</taxon>
        <taxon>Pseudomonadota</taxon>
        <taxon>Gammaproteobacteria</taxon>
        <taxon>Pseudomonadales</taxon>
        <taxon>Pseudomonadaceae</taxon>
        <taxon>Ectopseudomonas</taxon>
    </lineage>
</organism>